<accession>P84038</accession>
<keyword id="KW-0106">Calcium</keyword>
<keyword id="KW-1217">Cell adhesion impairing toxin</keyword>
<keyword id="KW-0903">Direct protein sequencing</keyword>
<keyword id="KW-1015">Disulfide bond</keyword>
<keyword id="KW-0325">Glycoprotein</keyword>
<keyword id="KW-1199">Hemostasis impairing toxin</keyword>
<keyword id="KW-1201">Platelet aggregation inhibiting toxin</keyword>
<keyword id="KW-0964">Secreted</keyword>
<keyword id="KW-0800">Toxin</keyword>
<protein>
    <recommendedName>
        <fullName>Snaclec lebecetin subunit alpha</fullName>
    </recommendedName>
</protein>
<evidence type="ECO:0000250" key="1">
    <source>
        <dbReference type="UniProtKB" id="P23806"/>
    </source>
</evidence>
<evidence type="ECO:0000255" key="2">
    <source>
        <dbReference type="PROSITE-ProRule" id="PRU00040"/>
    </source>
</evidence>
<evidence type="ECO:0000269" key="3">
    <source>
    </source>
</evidence>
<evidence type="ECO:0000303" key="4">
    <source>
    </source>
</evidence>
<evidence type="ECO:0000305" key="5"/>
<organism>
    <name type="scientific">Macrovipera lebetinus</name>
    <name type="common">Levantine viper</name>
    <name type="synonym">Vipera lebetina</name>
    <dbReference type="NCBI Taxonomy" id="3148341"/>
    <lineage>
        <taxon>Eukaryota</taxon>
        <taxon>Metazoa</taxon>
        <taxon>Chordata</taxon>
        <taxon>Craniata</taxon>
        <taxon>Vertebrata</taxon>
        <taxon>Euteleostomi</taxon>
        <taxon>Lepidosauria</taxon>
        <taxon>Squamata</taxon>
        <taxon>Bifurcata</taxon>
        <taxon>Unidentata</taxon>
        <taxon>Episquamata</taxon>
        <taxon>Toxicofera</taxon>
        <taxon>Serpentes</taxon>
        <taxon>Colubroidea</taxon>
        <taxon>Viperidae</taxon>
        <taxon>Viperinae</taxon>
        <taxon>Macrovipera</taxon>
    </lineage>
</organism>
<name>SLA_MACLB</name>
<comment type="function">
    <text evidence="3">Binds to the platelet GPIb/IX/V receptor system and inhibits ristocetin-induced platelet aggregation in human platelet-rich plasma. Strongly inhibits platelet aggregation induced by ADP, calcium ionophore, thrombin and collagen. Does not inhibit U46619-induced platelet aggregation.</text>
</comment>
<comment type="cofactor">
    <cofactor evidence="3">
        <name>Ca(2+)</name>
        <dbReference type="ChEBI" id="CHEBI:29108"/>
    </cofactor>
</comment>
<comment type="subunit">
    <text evidence="3">Heterodimer of subunits alpha and beta; disulfide-linked.</text>
</comment>
<comment type="subcellular location">
    <subcellularLocation>
        <location evidence="3">Secreted</location>
    </subcellularLocation>
</comment>
<comment type="tissue specificity">
    <text evidence="3">Expressed by the venom gland.</text>
</comment>
<comment type="PTM">
    <text evidence="3">Glycosylated.</text>
</comment>
<comment type="mass spectrometry" mass="15016.7" method="MALDI" evidence="3"/>
<comment type="similarity">
    <text evidence="5">Belongs to the snaclec family.</text>
</comment>
<dbReference type="SMR" id="P84038"/>
<dbReference type="GO" id="GO:0005576">
    <property type="term" value="C:extracellular region"/>
    <property type="evidence" value="ECO:0007669"/>
    <property type="project" value="UniProtKB-SubCell"/>
</dbReference>
<dbReference type="GO" id="GO:0090729">
    <property type="term" value="F:toxin activity"/>
    <property type="evidence" value="ECO:0007669"/>
    <property type="project" value="UniProtKB-KW"/>
</dbReference>
<dbReference type="Gene3D" id="3.10.100.10">
    <property type="entry name" value="Mannose-Binding Protein A, subunit A"/>
    <property type="match status" value="1"/>
</dbReference>
<dbReference type="InterPro" id="IPR016186">
    <property type="entry name" value="C-type_lectin-like/link_sf"/>
</dbReference>
<dbReference type="InterPro" id="IPR016187">
    <property type="entry name" value="CTDL_fold"/>
</dbReference>
<dbReference type="SUPFAM" id="SSF56436">
    <property type="entry name" value="C-type lectin-like"/>
    <property type="match status" value="1"/>
</dbReference>
<sequence length="42" mass="4852">DQDCLPGWSSHEGHCYKVFNLDKTWEDAEKFCTEQPSNGHLV</sequence>
<feature type="chain" id="PRO_0000046703" description="Snaclec lebecetin subunit alpha">
    <location>
        <begin position="1"/>
        <end position="42" status="greater than"/>
    </location>
</feature>
<feature type="domain" description="C-type lectin" evidence="1 2">
    <location>
        <begin position="1"/>
        <end position="42" status="greater than"/>
    </location>
</feature>
<feature type="disulfide bond" evidence="1 2">
    <location>
        <begin position="4"/>
        <end position="15"/>
    </location>
</feature>
<feature type="non-terminal residue" evidence="4">
    <location>
        <position position="42"/>
    </location>
</feature>
<reference evidence="5" key="1">
    <citation type="journal article" date="2003" name="Biochim. Biophys. Acta">
        <title>Lebecetin, a potent antiplatelet C-type lectin from Macrovipera lebetina venom.</title>
        <authorList>
            <person name="Sarray S."/>
            <person name="Srairi N."/>
            <person name="Hatmi M."/>
            <person name="Luis J."/>
            <person name="Louzir H."/>
            <person name="Regaya I."/>
            <person name="Slema H."/>
            <person name="Marvaldi J."/>
            <person name="El Ayeb M."/>
            <person name="Marrakchi N."/>
        </authorList>
    </citation>
    <scope>PROTEIN SEQUENCE</scope>
    <scope>FUNCTION</scope>
    <scope>COFACTOR</scope>
    <scope>SUBUNIT</scope>
    <scope>TISSUE SPECIFICITY</scope>
    <scope>SUBCELLULAR LOCATION</scope>
    <scope>GLYCOSYLATION</scope>
    <scope>MASS SPECTROMETRY</scope>
    <source>
        <tissue evidence="3">Venom</tissue>
    </source>
</reference>
<proteinExistence type="evidence at protein level"/>